<reference key="1">
    <citation type="journal article" date="2005" name="Science">
        <title>The transcriptional landscape of the mammalian genome.</title>
        <authorList>
            <person name="Carninci P."/>
            <person name="Kasukawa T."/>
            <person name="Katayama S."/>
            <person name="Gough J."/>
            <person name="Frith M.C."/>
            <person name="Maeda N."/>
            <person name="Oyama R."/>
            <person name="Ravasi T."/>
            <person name="Lenhard B."/>
            <person name="Wells C."/>
            <person name="Kodzius R."/>
            <person name="Shimokawa K."/>
            <person name="Bajic V.B."/>
            <person name="Brenner S.E."/>
            <person name="Batalov S."/>
            <person name="Forrest A.R."/>
            <person name="Zavolan M."/>
            <person name="Davis M.J."/>
            <person name="Wilming L.G."/>
            <person name="Aidinis V."/>
            <person name="Allen J.E."/>
            <person name="Ambesi-Impiombato A."/>
            <person name="Apweiler R."/>
            <person name="Aturaliya R.N."/>
            <person name="Bailey T.L."/>
            <person name="Bansal M."/>
            <person name="Baxter L."/>
            <person name="Beisel K.W."/>
            <person name="Bersano T."/>
            <person name="Bono H."/>
            <person name="Chalk A.M."/>
            <person name="Chiu K.P."/>
            <person name="Choudhary V."/>
            <person name="Christoffels A."/>
            <person name="Clutterbuck D.R."/>
            <person name="Crowe M.L."/>
            <person name="Dalla E."/>
            <person name="Dalrymple B.P."/>
            <person name="de Bono B."/>
            <person name="Della Gatta G."/>
            <person name="di Bernardo D."/>
            <person name="Down T."/>
            <person name="Engstrom P."/>
            <person name="Fagiolini M."/>
            <person name="Faulkner G."/>
            <person name="Fletcher C.F."/>
            <person name="Fukushima T."/>
            <person name="Furuno M."/>
            <person name="Futaki S."/>
            <person name="Gariboldi M."/>
            <person name="Georgii-Hemming P."/>
            <person name="Gingeras T.R."/>
            <person name="Gojobori T."/>
            <person name="Green R.E."/>
            <person name="Gustincich S."/>
            <person name="Harbers M."/>
            <person name="Hayashi Y."/>
            <person name="Hensch T.K."/>
            <person name="Hirokawa N."/>
            <person name="Hill D."/>
            <person name="Huminiecki L."/>
            <person name="Iacono M."/>
            <person name="Ikeo K."/>
            <person name="Iwama A."/>
            <person name="Ishikawa T."/>
            <person name="Jakt M."/>
            <person name="Kanapin A."/>
            <person name="Katoh M."/>
            <person name="Kawasawa Y."/>
            <person name="Kelso J."/>
            <person name="Kitamura H."/>
            <person name="Kitano H."/>
            <person name="Kollias G."/>
            <person name="Krishnan S.P."/>
            <person name="Kruger A."/>
            <person name="Kummerfeld S.K."/>
            <person name="Kurochkin I.V."/>
            <person name="Lareau L.F."/>
            <person name="Lazarevic D."/>
            <person name="Lipovich L."/>
            <person name="Liu J."/>
            <person name="Liuni S."/>
            <person name="McWilliam S."/>
            <person name="Madan Babu M."/>
            <person name="Madera M."/>
            <person name="Marchionni L."/>
            <person name="Matsuda H."/>
            <person name="Matsuzawa S."/>
            <person name="Miki H."/>
            <person name="Mignone F."/>
            <person name="Miyake S."/>
            <person name="Morris K."/>
            <person name="Mottagui-Tabar S."/>
            <person name="Mulder N."/>
            <person name="Nakano N."/>
            <person name="Nakauchi H."/>
            <person name="Ng P."/>
            <person name="Nilsson R."/>
            <person name="Nishiguchi S."/>
            <person name="Nishikawa S."/>
            <person name="Nori F."/>
            <person name="Ohara O."/>
            <person name="Okazaki Y."/>
            <person name="Orlando V."/>
            <person name="Pang K.C."/>
            <person name="Pavan W.J."/>
            <person name="Pavesi G."/>
            <person name="Pesole G."/>
            <person name="Petrovsky N."/>
            <person name="Piazza S."/>
            <person name="Reed J."/>
            <person name="Reid J.F."/>
            <person name="Ring B.Z."/>
            <person name="Ringwald M."/>
            <person name="Rost B."/>
            <person name="Ruan Y."/>
            <person name="Salzberg S.L."/>
            <person name="Sandelin A."/>
            <person name="Schneider C."/>
            <person name="Schoenbach C."/>
            <person name="Sekiguchi K."/>
            <person name="Semple C.A."/>
            <person name="Seno S."/>
            <person name="Sessa L."/>
            <person name="Sheng Y."/>
            <person name="Shibata Y."/>
            <person name="Shimada H."/>
            <person name="Shimada K."/>
            <person name="Silva D."/>
            <person name="Sinclair B."/>
            <person name="Sperling S."/>
            <person name="Stupka E."/>
            <person name="Sugiura K."/>
            <person name="Sultana R."/>
            <person name="Takenaka Y."/>
            <person name="Taki K."/>
            <person name="Tammoja K."/>
            <person name="Tan S.L."/>
            <person name="Tang S."/>
            <person name="Taylor M.S."/>
            <person name="Tegner J."/>
            <person name="Teichmann S.A."/>
            <person name="Ueda H.R."/>
            <person name="van Nimwegen E."/>
            <person name="Verardo R."/>
            <person name="Wei C.L."/>
            <person name="Yagi K."/>
            <person name="Yamanishi H."/>
            <person name="Zabarovsky E."/>
            <person name="Zhu S."/>
            <person name="Zimmer A."/>
            <person name="Hide W."/>
            <person name="Bult C."/>
            <person name="Grimmond S.M."/>
            <person name="Teasdale R.D."/>
            <person name="Liu E.T."/>
            <person name="Brusic V."/>
            <person name="Quackenbush J."/>
            <person name="Wahlestedt C."/>
            <person name="Mattick J.S."/>
            <person name="Hume D.A."/>
            <person name="Kai C."/>
            <person name="Sasaki D."/>
            <person name="Tomaru Y."/>
            <person name="Fukuda S."/>
            <person name="Kanamori-Katayama M."/>
            <person name="Suzuki M."/>
            <person name="Aoki J."/>
            <person name="Arakawa T."/>
            <person name="Iida J."/>
            <person name="Imamura K."/>
            <person name="Itoh M."/>
            <person name="Kato T."/>
            <person name="Kawaji H."/>
            <person name="Kawagashira N."/>
            <person name="Kawashima T."/>
            <person name="Kojima M."/>
            <person name="Kondo S."/>
            <person name="Konno H."/>
            <person name="Nakano K."/>
            <person name="Ninomiya N."/>
            <person name="Nishio T."/>
            <person name="Okada M."/>
            <person name="Plessy C."/>
            <person name="Shibata K."/>
            <person name="Shiraki T."/>
            <person name="Suzuki S."/>
            <person name="Tagami M."/>
            <person name="Waki K."/>
            <person name="Watahiki A."/>
            <person name="Okamura-Oho Y."/>
            <person name="Suzuki H."/>
            <person name="Kawai J."/>
            <person name="Hayashizaki Y."/>
        </authorList>
    </citation>
    <scope>NUCLEOTIDE SEQUENCE [LARGE SCALE MRNA]</scope>
    <source>
        <strain>C57BL/6J</strain>
        <tissue>Testis</tissue>
    </source>
</reference>
<reference key="2">
    <citation type="submission" date="2004-11" db="EMBL/GenBank/DDBJ databases">
        <title>The solution structure of RSGI RUH-020, a PDZ domain of hypothetical protein from mouse.</title>
        <authorList>
            <consortium name="RIKEN structural genomics initiative (RSGI)"/>
        </authorList>
    </citation>
    <scope>STRUCTURE BY NMR OF 8-120</scope>
</reference>
<proteinExistence type="evidence at protein level"/>
<evidence type="ECO:0000255" key="1">
    <source>
        <dbReference type="PROSITE-ProRule" id="PRU00143"/>
    </source>
</evidence>
<evidence type="ECO:0000305" key="2"/>
<evidence type="ECO:0007829" key="3">
    <source>
        <dbReference type="PDB" id="1WIF"/>
    </source>
</evidence>
<gene>
    <name type="primary">Pdzd9</name>
</gene>
<organism>
    <name type="scientific">Mus musculus</name>
    <name type="common">Mouse</name>
    <dbReference type="NCBI Taxonomy" id="10090"/>
    <lineage>
        <taxon>Eukaryota</taxon>
        <taxon>Metazoa</taxon>
        <taxon>Chordata</taxon>
        <taxon>Craniata</taxon>
        <taxon>Vertebrata</taxon>
        <taxon>Euteleostomi</taxon>
        <taxon>Mammalia</taxon>
        <taxon>Eutheria</taxon>
        <taxon>Euarchontoglires</taxon>
        <taxon>Glires</taxon>
        <taxon>Rodentia</taxon>
        <taxon>Myomorpha</taxon>
        <taxon>Muroidea</taxon>
        <taxon>Muridae</taxon>
        <taxon>Murinae</taxon>
        <taxon>Mus</taxon>
        <taxon>Mus</taxon>
    </lineage>
</organism>
<protein>
    <recommendedName>
        <fullName>PDZ domain-containing protein 9</fullName>
    </recommendedName>
</protein>
<name>PDZD9_MOUSE</name>
<feature type="chain" id="PRO_0000271217" description="PDZ domain-containing protein 9">
    <location>
        <begin position="1"/>
        <end position="266"/>
    </location>
</feature>
<feature type="domain" description="PDZ" evidence="1">
    <location>
        <begin position="27"/>
        <end position="109"/>
    </location>
</feature>
<feature type="sequence conflict" description="In Ref. 1; BAB24716." evidence="2" ref="1">
    <original>N</original>
    <variation>T</variation>
    <location>
        <position position="37"/>
    </location>
</feature>
<feature type="sequence conflict" description="In Ref. 1; BAB24716." evidence="2" ref="1">
    <original>K</original>
    <variation>M</variation>
    <location>
        <position position="189"/>
    </location>
</feature>
<feature type="sequence conflict" description="In Ref. 1; BAB24716." evidence="2" ref="1">
    <original>AP</original>
    <variation>RT</variation>
    <location>
        <begin position="216"/>
        <end position="217"/>
    </location>
</feature>
<feature type="strand" evidence="3">
    <location>
        <begin position="10"/>
        <end position="12"/>
    </location>
</feature>
<feature type="strand" evidence="3">
    <location>
        <begin position="28"/>
        <end position="34"/>
    </location>
</feature>
<feature type="strand" evidence="3">
    <location>
        <begin position="44"/>
        <end position="47"/>
    </location>
</feature>
<feature type="strand" evidence="3">
    <location>
        <begin position="50"/>
        <end position="53"/>
    </location>
</feature>
<feature type="helix" evidence="3">
    <location>
        <begin position="62"/>
        <end position="64"/>
    </location>
</feature>
<feature type="strand" evidence="3">
    <location>
        <begin position="66"/>
        <end position="68"/>
    </location>
</feature>
<feature type="strand" evidence="3">
    <location>
        <begin position="73"/>
        <end position="80"/>
    </location>
</feature>
<feature type="helix" evidence="3">
    <location>
        <begin position="87"/>
        <end position="94"/>
    </location>
</feature>
<feature type="strand" evidence="3">
    <location>
        <begin position="102"/>
        <end position="112"/>
    </location>
</feature>
<feature type="turn" evidence="3">
    <location>
        <begin position="116"/>
        <end position="118"/>
    </location>
</feature>
<dbReference type="EMBL" id="AK005921">
    <property type="protein sequence ID" value="BAB24317.1"/>
    <property type="molecule type" value="mRNA"/>
</dbReference>
<dbReference type="EMBL" id="AK006727">
    <property type="protein sequence ID" value="BAB24716.1"/>
    <property type="molecule type" value="mRNA"/>
</dbReference>
<dbReference type="EMBL" id="AK017019">
    <property type="protein sequence ID" value="BAB30553.1"/>
    <property type="molecule type" value="mRNA"/>
</dbReference>
<dbReference type="CCDS" id="CCDS40110.1"/>
<dbReference type="RefSeq" id="NP_001035226.1">
    <property type="nucleotide sequence ID" value="NM_001040136.2"/>
</dbReference>
<dbReference type="RefSeq" id="XP_011240188.1">
    <property type="nucleotide sequence ID" value="XM_011241886.2"/>
</dbReference>
<dbReference type="PDB" id="1WIF">
    <property type="method" value="NMR"/>
    <property type="chains" value="A=8-120"/>
</dbReference>
<dbReference type="PDBsum" id="1WIF"/>
<dbReference type="SMR" id="Q9D9M4"/>
<dbReference type="FunCoup" id="Q9D9M4">
    <property type="interactions" value="46"/>
</dbReference>
<dbReference type="STRING" id="10090.ENSMUSP00000033178"/>
<dbReference type="PhosphoSitePlus" id="Q9D9M4"/>
<dbReference type="PaxDb" id="10090-ENSMUSP00000033178"/>
<dbReference type="ProteomicsDB" id="287819"/>
<dbReference type="Antibodypedia" id="25794">
    <property type="antibodies" value="54 antibodies from 12 providers"/>
</dbReference>
<dbReference type="Ensembl" id="ENSMUST00000033178.4">
    <property type="protein sequence ID" value="ENSMUSP00000033178.3"/>
    <property type="gene ID" value="ENSMUSG00000030887.5"/>
</dbReference>
<dbReference type="GeneID" id="67983"/>
<dbReference type="UCSC" id="uc009jmu.1">
    <property type="organism name" value="mouse"/>
</dbReference>
<dbReference type="AGR" id="MGI:1915233"/>
<dbReference type="CTD" id="255762"/>
<dbReference type="MGI" id="MGI:1915233">
    <property type="gene designation" value="Pdzd9"/>
</dbReference>
<dbReference type="VEuPathDB" id="HostDB:ENSMUSG00000030887"/>
<dbReference type="eggNOG" id="ENOG502RYRV">
    <property type="taxonomic scope" value="Eukaryota"/>
</dbReference>
<dbReference type="GeneTree" id="ENSGT00390000008326"/>
<dbReference type="HOGENOM" id="CLU_095719_0_0_1"/>
<dbReference type="InParanoid" id="Q9D9M4"/>
<dbReference type="OMA" id="YWTMVKH"/>
<dbReference type="OrthoDB" id="9900486at2759"/>
<dbReference type="PhylomeDB" id="Q9D9M4"/>
<dbReference type="TreeFam" id="TF337738"/>
<dbReference type="BioGRID-ORCS" id="67983">
    <property type="hits" value="3 hits in 76 CRISPR screens"/>
</dbReference>
<dbReference type="ChiTaRS" id="Pdzd9">
    <property type="organism name" value="mouse"/>
</dbReference>
<dbReference type="EvolutionaryTrace" id="Q9D9M4"/>
<dbReference type="PRO" id="PR:Q9D9M4"/>
<dbReference type="Proteomes" id="UP000000589">
    <property type="component" value="Chromosome 7"/>
</dbReference>
<dbReference type="RNAct" id="Q9D9M4">
    <property type="molecule type" value="protein"/>
</dbReference>
<dbReference type="Bgee" id="ENSMUSG00000030887">
    <property type="expression patterns" value="Expressed in spermatid and 39 other cell types or tissues"/>
</dbReference>
<dbReference type="ExpressionAtlas" id="Q9D9M4">
    <property type="expression patterns" value="baseline and differential"/>
</dbReference>
<dbReference type="Gene3D" id="2.30.42.10">
    <property type="match status" value="1"/>
</dbReference>
<dbReference type="InterPro" id="IPR001478">
    <property type="entry name" value="PDZ"/>
</dbReference>
<dbReference type="InterPro" id="IPR036034">
    <property type="entry name" value="PDZ_sf"/>
</dbReference>
<dbReference type="InterPro" id="IPR039179">
    <property type="entry name" value="PDZD9"/>
</dbReference>
<dbReference type="PANTHER" id="PTHR22698">
    <property type="entry name" value="PDZ DOMAIN-CONTAINING PROTEIN 9"/>
    <property type="match status" value="1"/>
</dbReference>
<dbReference type="PANTHER" id="PTHR22698:SF1">
    <property type="entry name" value="PDZ DOMAIN-CONTAINING PROTEIN 9"/>
    <property type="match status" value="1"/>
</dbReference>
<dbReference type="Pfam" id="PF00595">
    <property type="entry name" value="PDZ"/>
    <property type="match status" value="1"/>
</dbReference>
<dbReference type="SMART" id="SM00228">
    <property type="entry name" value="PDZ"/>
    <property type="match status" value="1"/>
</dbReference>
<dbReference type="SUPFAM" id="SSF50156">
    <property type="entry name" value="PDZ domain-like"/>
    <property type="match status" value="1"/>
</dbReference>
<dbReference type="PROSITE" id="PS50106">
    <property type="entry name" value="PDZ"/>
    <property type="match status" value="1"/>
</dbReference>
<accession>Q9D9M4</accession>
<accession>Q9CR71</accession>
<sequence>MEKGSLKSKNEKEQLSKAKASVSSLNKVIQTKLTVGNLGLGLVVIQNGPYLQISHLINKGAAASDGILQPGDVLISVGHANVLGYTLREFLKLLQNITIGTVLQIKAYRGFLEIPQEWQDVYDLIPETKFPIPHTPKKTEPARESLVKDDHEEAVLDKKLKYYRYPRSVWNHPVRTPISISTEWHGYEKKERTISVGRDINSDVVIHKDDKKELRAPSPYWAMVEQDRAISSSSSSTANSSSSDAFWLEDYAQVEEGNGKQVSKFG</sequence>
<keyword id="KW-0002">3D-structure</keyword>
<keyword id="KW-1185">Reference proteome</keyword>